<accession>A1W4G1</accession>
<comment type="function">
    <text evidence="1">This is one of the proteins that binds to the 5S RNA in the ribosome where it forms part of the central protuberance.</text>
</comment>
<comment type="subunit">
    <text evidence="1">Part of the 50S ribosomal subunit; part of the 5S rRNA/L5/L18/L25 subcomplex. Contacts the 5S rRNA. Binds to the 5S rRNA independently of L5 and L18.</text>
</comment>
<comment type="similarity">
    <text evidence="1">Belongs to the bacterial ribosomal protein bL25 family. CTC subfamily.</text>
</comment>
<sequence length="208" mass="22565">MQFVAFERAKQGTGASRRLRISGKAPGIVYGGSAEPQLIEIDHNALWHALKKEAFHSSILDMELNGQVTKVLLRDVQYHPFKQQVLHVDFQRVDEKTRVHLKVPLHFEGVEGSQAVKVEGCTVTPLIHELDVMCMPAQLPEFIKVDLSGLTSKSTMGLQSVKLPHGVKAVVRGSNKNPALVSIKLPEVVADATAAAAPAAAPAKKGKK</sequence>
<reference key="1">
    <citation type="submission" date="2006-12" db="EMBL/GenBank/DDBJ databases">
        <title>Complete sequence of chromosome 1 of Acidovorax sp. JS42.</title>
        <authorList>
            <person name="Copeland A."/>
            <person name="Lucas S."/>
            <person name="Lapidus A."/>
            <person name="Barry K."/>
            <person name="Detter J.C."/>
            <person name="Glavina del Rio T."/>
            <person name="Dalin E."/>
            <person name="Tice H."/>
            <person name="Pitluck S."/>
            <person name="Chertkov O."/>
            <person name="Brettin T."/>
            <person name="Bruce D."/>
            <person name="Han C."/>
            <person name="Tapia R."/>
            <person name="Gilna P."/>
            <person name="Schmutz J."/>
            <person name="Larimer F."/>
            <person name="Land M."/>
            <person name="Hauser L."/>
            <person name="Kyrpides N."/>
            <person name="Kim E."/>
            <person name="Stahl D."/>
            <person name="Richardson P."/>
        </authorList>
    </citation>
    <scope>NUCLEOTIDE SEQUENCE [LARGE SCALE GENOMIC DNA]</scope>
    <source>
        <strain>JS42</strain>
    </source>
</reference>
<keyword id="KW-0687">Ribonucleoprotein</keyword>
<keyword id="KW-0689">Ribosomal protein</keyword>
<keyword id="KW-0694">RNA-binding</keyword>
<keyword id="KW-0699">rRNA-binding</keyword>
<feature type="chain" id="PRO_1000052862" description="Large ribosomal subunit protein bL25">
    <location>
        <begin position="1"/>
        <end position="208"/>
    </location>
</feature>
<name>RL25_ACISJ</name>
<organism>
    <name type="scientific">Acidovorax sp. (strain JS42)</name>
    <dbReference type="NCBI Taxonomy" id="232721"/>
    <lineage>
        <taxon>Bacteria</taxon>
        <taxon>Pseudomonadati</taxon>
        <taxon>Pseudomonadota</taxon>
        <taxon>Betaproteobacteria</taxon>
        <taxon>Burkholderiales</taxon>
        <taxon>Comamonadaceae</taxon>
        <taxon>Acidovorax</taxon>
    </lineage>
</organism>
<gene>
    <name evidence="1" type="primary">rplY</name>
    <name evidence="1" type="synonym">ctc</name>
    <name type="ordered locus">Ajs_0894</name>
</gene>
<protein>
    <recommendedName>
        <fullName evidence="1">Large ribosomal subunit protein bL25</fullName>
    </recommendedName>
    <alternativeName>
        <fullName evidence="2">50S ribosomal protein L25</fullName>
    </alternativeName>
    <alternativeName>
        <fullName evidence="1">General stress protein CTC</fullName>
    </alternativeName>
</protein>
<dbReference type="EMBL" id="CP000539">
    <property type="protein sequence ID" value="ABM41136.1"/>
    <property type="molecule type" value="Genomic_DNA"/>
</dbReference>
<dbReference type="SMR" id="A1W4G1"/>
<dbReference type="STRING" id="232721.Ajs_0894"/>
<dbReference type="KEGG" id="ajs:Ajs_0894"/>
<dbReference type="eggNOG" id="COG1825">
    <property type="taxonomic scope" value="Bacteria"/>
</dbReference>
<dbReference type="HOGENOM" id="CLU_075939_0_1_4"/>
<dbReference type="Proteomes" id="UP000000645">
    <property type="component" value="Chromosome"/>
</dbReference>
<dbReference type="GO" id="GO:0022625">
    <property type="term" value="C:cytosolic large ribosomal subunit"/>
    <property type="evidence" value="ECO:0007669"/>
    <property type="project" value="TreeGrafter"/>
</dbReference>
<dbReference type="GO" id="GO:0008097">
    <property type="term" value="F:5S rRNA binding"/>
    <property type="evidence" value="ECO:0007669"/>
    <property type="project" value="InterPro"/>
</dbReference>
<dbReference type="GO" id="GO:0003735">
    <property type="term" value="F:structural constituent of ribosome"/>
    <property type="evidence" value="ECO:0007669"/>
    <property type="project" value="InterPro"/>
</dbReference>
<dbReference type="GO" id="GO:0006412">
    <property type="term" value="P:translation"/>
    <property type="evidence" value="ECO:0007669"/>
    <property type="project" value="UniProtKB-UniRule"/>
</dbReference>
<dbReference type="CDD" id="cd00495">
    <property type="entry name" value="Ribosomal_L25_TL5_CTC"/>
    <property type="match status" value="1"/>
</dbReference>
<dbReference type="Gene3D" id="2.170.120.20">
    <property type="entry name" value="Ribosomal protein L25, beta domain"/>
    <property type="match status" value="1"/>
</dbReference>
<dbReference type="Gene3D" id="2.40.240.10">
    <property type="entry name" value="Ribosomal Protein L25, Chain P"/>
    <property type="match status" value="1"/>
</dbReference>
<dbReference type="HAMAP" id="MF_01336">
    <property type="entry name" value="Ribosomal_bL25"/>
    <property type="match status" value="1"/>
</dbReference>
<dbReference type="HAMAP" id="MF_01334">
    <property type="entry name" value="Ribosomal_bL25_CTC"/>
    <property type="match status" value="1"/>
</dbReference>
<dbReference type="InterPro" id="IPR020056">
    <property type="entry name" value="Rbsml_bL25/Gln-tRNA_synth_N"/>
</dbReference>
<dbReference type="InterPro" id="IPR011035">
    <property type="entry name" value="Ribosomal_bL25/Gln-tRNA_synth"/>
</dbReference>
<dbReference type="InterPro" id="IPR020057">
    <property type="entry name" value="Ribosomal_bL25_b-dom"/>
</dbReference>
<dbReference type="InterPro" id="IPR037121">
    <property type="entry name" value="Ribosomal_bL25_C"/>
</dbReference>
<dbReference type="InterPro" id="IPR001021">
    <property type="entry name" value="Ribosomal_bL25_long"/>
</dbReference>
<dbReference type="InterPro" id="IPR020055">
    <property type="entry name" value="Ribosomal_bL25_short"/>
</dbReference>
<dbReference type="InterPro" id="IPR029751">
    <property type="entry name" value="Ribosomal_L25_dom"/>
</dbReference>
<dbReference type="InterPro" id="IPR020930">
    <property type="entry name" value="Ribosomal_uL5_bac-type"/>
</dbReference>
<dbReference type="NCBIfam" id="TIGR00731">
    <property type="entry name" value="bL25_bact_ctc"/>
    <property type="match status" value="1"/>
</dbReference>
<dbReference type="NCBIfam" id="NF004130">
    <property type="entry name" value="PRK05618.1-5"/>
    <property type="match status" value="1"/>
</dbReference>
<dbReference type="NCBIfam" id="NF004612">
    <property type="entry name" value="PRK05943.1"/>
    <property type="match status" value="1"/>
</dbReference>
<dbReference type="PANTHER" id="PTHR33284">
    <property type="entry name" value="RIBOSOMAL PROTEIN L25/GLN-TRNA SYNTHETASE, ANTI-CODON-BINDING DOMAIN-CONTAINING PROTEIN"/>
    <property type="match status" value="1"/>
</dbReference>
<dbReference type="PANTHER" id="PTHR33284:SF1">
    <property type="entry name" value="RIBOSOMAL PROTEIN L25_GLN-TRNA SYNTHETASE, ANTI-CODON-BINDING DOMAIN-CONTAINING PROTEIN"/>
    <property type="match status" value="1"/>
</dbReference>
<dbReference type="Pfam" id="PF01386">
    <property type="entry name" value="Ribosomal_L25p"/>
    <property type="match status" value="1"/>
</dbReference>
<dbReference type="Pfam" id="PF14693">
    <property type="entry name" value="Ribosomal_TL5_C"/>
    <property type="match status" value="1"/>
</dbReference>
<dbReference type="SUPFAM" id="SSF50715">
    <property type="entry name" value="Ribosomal protein L25-like"/>
    <property type="match status" value="1"/>
</dbReference>
<proteinExistence type="inferred from homology"/>
<evidence type="ECO:0000255" key="1">
    <source>
        <dbReference type="HAMAP-Rule" id="MF_01334"/>
    </source>
</evidence>
<evidence type="ECO:0000305" key="2"/>